<name>CH10_EHRCH</name>
<evidence type="ECO:0000255" key="1">
    <source>
        <dbReference type="HAMAP-Rule" id="MF_00580"/>
    </source>
</evidence>
<evidence type="ECO:0000305" key="2"/>
<comment type="function">
    <text evidence="1">Together with the chaperonin GroEL, plays an essential role in assisting protein folding. The GroEL-GroES system forms a nano-cage that allows encapsulation of the non-native substrate proteins and provides a physical environment optimized to promote and accelerate protein folding. GroES binds to the apical surface of the GroEL ring, thereby capping the opening of the GroEL channel.</text>
</comment>
<comment type="subunit">
    <text evidence="1">Heptamer of 7 subunits arranged in a ring. Interacts with the chaperonin GroEL.</text>
</comment>
<comment type="subcellular location">
    <subcellularLocation>
        <location evidence="1">Cytoplasm</location>
    </subcellularLocation>
</comment>
<comment type="similarity">
    <text evidence="1 2">Belongs to the GroES chaperonin family.</text>
</comment>
<protein>
    <recommendedName>
        <fullName evidence="1">Co-chaperonin GroES</fullName>
    </recommendedName>
    <alternativeName>
        <fullName evidence="1">10 kDa chaperonin</fullName>
    </alternativeName>
    <alternativeName>
        <fullName evidence="1">Chaperonin-10</fullName>
        <shortName evidence="1">Cpn10</shortName>
    </alternativeName>
</protein>
<reference key="1">
    <citation type="journal article" date="1993" name="Infect. Immun.">
        <title>Ehrlichia chaffeensis expresses an immunoreactive protein homologous to the Escherichia coli GroEL protein.</title>
        <authorList>
            <person name="Sumner J.W."/>
            <person name="Sims K.C."/>
            <person name="Jones D.C."/>
            <person name="Anderson B.E."/>
        </authorList>
    </citation>
    <scope>NUCLEOTIDE SEQUENCE [GENOMIC DNA]</scope>
</reference>
<keyword id="KW-0143">Chaperone</keyword>
<keyword id="KW-0963">Cytoplasm</keyword>
<keyword id="KW-0346">Stress response</keyword>
<organism>
    <name type="scientific">Ehrlichia chaffeensis</name>
    <dbReference type="NCBI Taxonomy" id="945"/>
    <lineage>
        <taxon>Bacteria</taxon>
        <taxon>Pseudomonadati</taxon>
        <taxon>Pseudomonadota</taxon>
        <taxon>Alphaproteobacteria</taxon>
        <taxon>Rickettsiales</taxon>
        <taxon>Anaplasmataceae</taxon>
        <taxon>Ehrlichia</taxon>
    </lineage>
</organism>
<gene>
    <name evidence="1" type="primary">groES</name>
    <name evidence="1" type="synonym">groS</name>
</gene>
<feature type="chain" id="PRO_0000174749" description="Co-chaperonin GroES">
    <location>
        <begin position="1"/>
        <end position="94"/>
    </location>
</feature>
<accession>P42386</accession>
<proteinExistence type="inferred from homology"/>
<dbReference type="EMBL" id="L10917">
    <property type="protein sequence ID" value="AAB49804.1"/>
    <property type="molecule type" value="Genomic_DNA"/>
</dbReference>
<dbReference type="PIR" id="S61296">
    <property type="entry name" value="S61296"/>
</dbReference>
<dbReference type="SMR" id="P42386"/>
<dbReference type="GO" id="GO:0005737">
    <property type="term" value="C:cytoplasm"/>
    <property type="evidence" value="ECO:0007669"/>
    <property type="project" value="UniProtKB-SubCell"/>
</dbReference>
<dbReference type="GO" id="GO:0005524">
    <property type="term" value="F:ATP binding"/>
    <property type="evidence" value="ECO:0007669"/>
    <property type="project" value="InterPro"/>
</dbReference>
<dbReference type="GO" id="GO:0046872">
    <property type="term" value="F:metal ion binding"/>
    <property type="evidence" value="ECO:0007669"/>
    <property type="project" value="TreeGrafter"/>
</dbReference>
<dbReference type="GO" id="GO:0044183">
    <property type="term" value="F:protein folding chaperone"/>
    <property type="evidence" value="ECO:0007669"/>
    <property type="project" value="InterPro"/>
</dbReference>
<dbReference type="GO" id="GO:0051087">
    <property type="term" value="F:protein-folding chaperone binding"/>
    <property type="evidence" value="ECO:0007669"/>
    <property type="project" value="TreeGrafter"/>
</dbReference>
<dbReference type="GO" id="GO:0051082">
    <property type="term" value="F:unfolded protein binding"/>
    <property type="evidence" value="ECO:0007669"/>
    <property type="project" value="TreeGrafter"/>
</dbReference>
<dbReference type="GO" id="GO:0051085">
    <property type="term" value="P:chaperone cofactor-dependent protein refolding"/>
    <property type="evidence" value="ECO:0007669"/>
    <property type="project" value="TreeGrafter"/>
</dbReference>
<dbReference type="CDD" id="cd00320">
    <property type="entry name" value="cpn10"/>
    <property type="match status" value="1"/>
</dbReference>
<dbReference type="FunFam" id="2.30.33.40:FF:000001">
    <property type="entry name" value="10 kDa chaperonin"/>
    <property type="match status" value="1"/>
</dbReference>
<dbReference type="Gene3D" id="2.30.33.40">
    <property type="entry name" value="GroES chaperonin"/>
    <property type="match status" value="1"/>
</dbReference>
<dbReference type="HAMAP" id="MF_00580">
    <property type="entry name" value="CH10"/>
    <property type="match status" value="1"/>
</dbReference>
<dbReference type="InterPro" id="IPR020818">
    <property type="entry name" value="Chaperonin_GroES"/>
</dbReference>
<dbReference type="InterPro" id="IPR037124">
    <property type="entry name" value="Chaperonin_GroES_sf"/>
</dbReference>
<dbReference type="InterPro" id="IPR011032">
    <property type="entry name" value="GroES-like_sf"/>
</dbReference>
<dbReference type="NCBIfam" id="NF001533">
    <property type="entry name" value="PRK00364.2-4"/>
    <property type="match status" value="1"/>
</dbReference>
<dbReference type="PANTHER" id="PTHR10772">
    <property type="entry name" value="10 KDA HEAT SHOCK PROTEIN"/>
    <property type="match status" value="1"/>
</dbReference>
<dbReference type="PANTHER" id="PTHR10772:SF63">
    <property type="entry name" value="20 KDA CHAPERONIN, CHLOROPLASTIC"/>
    <property type="match status" value="1"/>
</dbReference>
<dbReference type="Pfam" id="PF00166">
    <property type="entry name" value="Cpn10"/>
    <property type="match status" value="1"/>
</dbReference>
<dbReference type="PRINTS" id="PR00297">
    <property type="entry name" value="CHAPERONIN10"/>
</dbReference>
<dbReference type="SMART" id="SM00883">
    <property type="entry name" value="Cpn10"/>
    <property type="match status" value="1"/>
</dbReference>
<dbReference type="SUPFAM" id="SSF50129">
    <property type="entry name" value="GroES-like"/>
    <property type="match status" value="1"/>
</dbReference>
<sequence length="94" mass="10469">MNLNMLHDNVLIEALEECNSSSPIQLPDSAKKKPTQGKVVAVGPGVYNHSGNILPMTIKVGDVVFYRQWAGNEIEFHEKKYIVMKESDIIAKEA</sequence>